<gene>
    <name evidence="1" type="primary">hcaD</name>
    <name type="ordered locus">SFV_2590</name>
</gene>
<proteinExistence type="inferred from homology"/>
<feature type="chain" id="PRO_0000333728" description="3-phenylpropionate/cinnamic acid dioxygenase ferredoxin--NAD(+) reductase component">
    <location>
        <begin position="1"/>
        <end position="410"/>
    </location>
</feature>
<feature type="binding site" evidence="1">
    <location>
        <begin position="5"/>
        <end position="36"/>
    </location>
    <ligand>
        <name>FAD</name>
        <dbReference type="ChEBI" id="CHEBI:57692"/>
    </ligand>
</feature>
<feature type="binding site" evidence="1">
    <location>
        <begin position="146"/>
        <end position="184"/>
    </location>
    <ligand>
        <name>NAD(+)</name>
        <dbReference type="ChEBI" id="CHEBI:57540"/>
    </ligand>
</feature>
<accession>Q0T1X7</accession>
<protein>
    <recommendedName>
        <fullName evidence="1">3-phenylpropionate/cinnamic acid dioxygenase ferredoxin--NAD(+) reductase component</fullName>
        <ecNumber evidence="1">1.18.1.3</ecNumber>
    </recommendedName>
</protein>
<comment type="function">
    <text evidence="1">Part of the multicomponent 3-phenylpropionate dioxygenase, that converts 3-phenylpropionic acid (PP) and cinnamic acid (CI) into 3-phenylpropionate-dihydrodiol (PP-dihydrodiol) and cinnamic acid-dihydrodiol (CI-dihydrodiol), respectively.</text>
</comment>
<comment type="catalytic activity">
    <reaction evidence="1">
        <text>2 reduced [2Fe-2S]-[ferredoxin] + NAD(+) + H(+) = 2 oxidized [2Fe-2S]-[ferredoxin] + NADH</text>
        <dbReference type="Rhea" id="RHEA:16521"/>
        <dbReference type="Rhea" id="RHEA-COMP:10000"/>
        <dbReference type="Rhea" id="RHEA-COMP:10001"/>
        <dbReference type="ChEBI" id="CHEBI:15378"/>
        <dbReference type="ChEBI" id="CHEBI:33737"/>
        <dbReference type="ChEBI" id="CHEBI:33738"/>
        <dbReference type="ChEBI" id="CHEBI:57540"/>
        <dbReference type="ChEBI" id="CHEBI:57945"/>
        <dbReference type="EC" id="1.18.1.3"/>
    </reaction>
</comment>
<comment type="cofactor">
    <cofactor evidence="1">
        <name>FAD</name>
        <dbReference type="ChEBI" id="CHEBI:57692"/>
    </cofactor>
</comment>
<comment type="pathway">
    <text evidence="1">Aromatic compound metabolism; 3-phenylpropanoate degradation.</text>
</comment>
<comment type="subunit">
    <text evidence="1">This dioxygenase system consists of four proteins: the two subunits of the hydroxylase component (HcaE and HcaF), a ferredoxin (HcaC) and a ferredoxin reductase (HcaD).</text>
</comment>
<comment type="similarity">
    <text evidence="1">Belongs to the bacterial ring-hydroxylating dioxygenase ferredoxin reductase family.</text>
</comment>
<evidence type="ECO:0000255" key="1">
    <source>
        <dbReference type="HAMAP-Rule" id="MF_01651"/>
    </source>
</evidence>
<name>HCAD_SHIF8</name>
<organism>
    <name type="scientific">Shigella flexneri serotype 5b (strain 8401)</name>
    <dbReference type="NCBI Taxonomy" id="373384"/>
    <lineage>
        <taxon>Bacteria</taxon>
        <taxon>Pseudomonadati</taxon>
        <taxon>Pseudomonadota</taxon>
        <taxon>Gammaproteobacteria</taxon>
        <taxon>Enterobacterales</taxon>
        <taxon>Enterobacteriaceae</taxon>
        <taxon>Shigella</taxon>
    </lineage>
</organism>
<keyword id="KW-0058">Aromatic hydrocarbons catabolism</keyword>
<keyword id="KW-0274">FAD</keyword>
<keyword id="KW-0285">Flavoprotein</keyword>
<keyword id="KW-0520">NAD</keyword>
<keyword id="KW-0560">Oxidoreductase</keyword>
<reference key="1">
    <citation type="journal article" date="2006" name="BMC Genomics">
        <title>Complete genome sequence of Shigella flexneri 5b and comparison with Shigella flexneri 2a.</title>
        <authorList>
            <person name="Nie H."/>
            <person name="Yang F."/>
            <person name="Zhang X."/>
            <person name="Yang J."/>
            <person name="Chen L."/>
            <person name="Wang J."/>
            <person name="Xiong Z."/>
            <person name="Peng J."/>
            <person name="Sun L."/>
            <person name="Dong J."/>
            <person name="Xue Y."/>
            <person name="Xu X."/>
            <person name="Chen S."/>
            <person name="Yao Z."/>
            <person name="Shen Y."/>
            <person name="Jin Q."/>
        </authorList>
    </citation>
    <scope>NUCLEOTIDE SEQUENCE [LARGE SCALE GENOMIC DNA]</scope>
    <source>
        <strain>8401</strain>
    </source>
</reference>
<dbReference type="EC" id="1.18.1.3" evidence="1"/>
<dbReference type="EMBL" id="CP000266">
    <property type="protein sequence ID" value="ABF04688.1"/>
    <property type="molecule type" value="Genomic_DNA"/>
</dbReference>
<dbReference type="RefSeq" id="WP_000660784.1">
    <property type="nucleotide sequence ID" value="NC_008258.1"/>
</dbReference>
<dbReference type="SMR" id="Q0T1X7"/>
<dbReference type="KEGG" id="sfv:SFV_2590"/>
<dbReference type="HOGENOM" id="CLU_003291_4_0_6"/>
<dbReference type="UniPathway" id="UPA00714"/>
<dbReference type="Proteomes" id="UP000000659">
    <property type="component" value="Chromosome"/>
</dbReference>
<dbReference type="GO" id="GO:0005737">
    <property type="term" value="C:cytoplasm"/>
    <property type="evidence" value="ECO:0007669"/>
    <property type="project" value="TreeGrafter"/>
</dbReference>
<dbReference type="GO" id="GO:0008695">
    <property type="term" value="F:3-phenylpropionate dioxygenase activity"/>
    <property type="evidence" value="ECO:0007669"/>
    <property type="project" value="UniProtKB-UniRule"/>
</dbReference>
<dbReference type="GO" id="GO:0008860">
    <property type="term" value="F:ferredoxin-NAD+ reductase activity"/>
    <property type="evidence" value="ECO:0007669"/>
    <property type="project" value="UniProtKB-EC"/>
</dbReference>
<dbReference type="GO" id="GO:0016651">
    <property type="term" value="F:oxidoreductase activity, acting on NAD(P)H"/>
    <property type="evidence" value="ECO:0007669"/>
    <property type="project" value="TreeGrafter"/>
</dbReference>
<dbReference type="GO" id="GO:0019380">
    <property type="term" value="P:3-phenylpropionate catabolic process"/>
    <property type="evidence" value="ECO:0007669"/>
    <property type="project" value="UniProtKB-UniRule"/>
</dbReference>
<dbReference type="FunFam" id="3.30.390.30:FF:000010">
    <property type="entry name" value="3-phenylpropionate/cinnamic acid dioxygenase ferredoxin--NAD(+) reductase component"/>
    <property type="match status" value="1"/>
</dbReference>
<dbReference type="FunFam" id="3.50.50.60:FF:000088">
    <property type="entry name" value="3-phenylpropionate/cinnamic acid dioxygenase ferredoxin--NAD(+) reductase component"/>
    <property type="match status" value="1"/>
</dbReference>
<dbReference type="Gene3D" id="3.30.390.30">
    <property type="match status" value="1"/>
</dbReference>
<dbReference type="Gene3D" id="3.50.50.60">
    <property type="entry name" value="FAD/NAD(P)-binding domain"/>
    <property type="match status" value="2"/>
</dbReference>
<dbReference type="HAMAP" id="MF_01651">
    <property type="entry name" value="HcaD"/>
    <property type="match status" value="1"/>
</dbReference>
<dbReference type="InterPro" id="IPR050446">
    <property type="entry name" value="FAD-oxidoreductase/Apoptosis"/>
</dbReference>
<dbReference type="InterPro" id="IPR036188">
    <property type="entry name" value="FAD/NAD-bd_sf"/>
</dbReference>
<dbReference type="InterPro" id="IPR023753">
    <property type="entry name" value="FAD/NAD-binding_dom"/>
</dbReference>
<dbReference type="InterPro" id="IPR016156">
    <property type="entry name" value="FAD/NAD-linked_Rdtase_dimer_sf"/>
</dbReference>
<dbReference type="InterPro" id="IPR023744">
    <property type="entry name" value="HcaD"/>
</dbReference>
<dbReference type="InterPro" id="IPR028202">
    <property type="entry name" value="Reductase_C"/>
</dbReference>
<dbReference type="InterPro" id="IPR053382">
    <property type="entry name" value="Ring-hydroxylating_dioxygenase"/>
</dbReference>
<dbReference type="NCBIfam" id="NF042949">
    <property type="entry name" value="3PPDioc_HcaD"/>
    <property type="match status" value="1"/>
</dbReference>
<dbReference type="NCBIfam" id="NF007286">
    <property type="entry name" value="PRK09754.1"/>
    <property type="match status" value="1"/>
</dbReference>
<dbReference type="PANTHER" id="PTHR43557">
    <property type="entry name" value="APOPTOSIS-INDUCING FACTOR 1"/>
    <property type="match status" value="1"/>
</dbReference>
<dbReference type="PANTHER" id="PTHR43557:SF2">
    <property type="entry name" value="RIESKE DOMAIN-CONTAINING PROTEIN-RELATED"/>
    <property type="match status" value="1"/>
</dbReference>
<dbReference type="Pfam" id="PF07992">
    <property type="entry name" value="Pyr_redox_2"/>
    <property type="match status" value="1"/>
</dbReference>
<dbReference type="Pfam" id="PF14759">
    <property type="entry name" value="Reductase_C"/>
    <property type="match status" value="1"/>
</dbReference>
<dbReference type="PRINTS" id="PR00368">
    <property type="entry name" value="FADPNR"/>
</dbReference>
<dbReference type="PRINTS" id="PR00411">
    <property type="entry name" value="PNDRDTASEI"/>
</dbReference>
<dbReference type="SUPFAM" id="SSF51905">
    <property type="entry name" value="FAD/NAD(P)-binding domain"/>
    <property type="match status" value="1"/>
</dbReference>
<dbReference type="SUPFAM" id="SSF55424">
    <property type="entry name" value="FAD/NAD-linked reductases, dimerisation (C-terminal) domain"/>
    <property type="match status" value="1"/>
</dbReference>
<sequence length="410" mass="44972">MKEKTIIIVGGGQAAAMAAASLRQQGFTGELHLFSDERHLPYERPPLSKSMLLEDSPQLQQVLPANWWQENNVHLHSGVTIKTLGRDTRELVLTNGESWHWDQLFIATGAAARPLPLLDALGERCFTLHHAGDAARLREVLQPERSVVIVGAGTIGLELAASATQRSAAQRSAAQRRCKVTVIELAATVMGRNAPPPVQRYLLQRHQQAGVRILLNNAIEHVVDGEKVELTLQSGETLQADVVIYGIGISANEQLAREANLDTANGIVIDEACRTCDPAIFAGGDVAITRLDNGALHRCESWENANNQAQIAAAAMLGLPLPLLPPPWFWSDQYSDNLQFIGDMRGDDWLCRGNPETQKAIWFNLQNGVLIGAVTLNQGREIRPIRKWIQSGKTFDAKLLIDENIALKSL</sequence>